<gene>
    <name evidence="1" type="primary">moaC</name>
    <name type="ordered locus">Ddes_0500</name>
</gene>
<feature type="chain" id="PRO_1000164885" description="Cyclic pyranopterin monophosphate synthase">
    <location>
        <begin position="1"/>
        <end position="163"/>
    </location>
</feature>
<feature type="active site" evidence="1">
    <location>
        <position position="129"/>
    </location>
</feature>
<feature type="binding site" evidence="1">
    <location>
        <begin position="76"/>
        <end position="78"/>
    </location>
    <ligand>
        <name>substrate</name>
    </ligand>
</feature>
<feature type="binding site" evidence="1">
    <location>
        <begin position="114"/>
        <end position="115"/>
    </location>
    <ligand>
        <name>substrate</name>
    </ligand>
</feature>
<keyword id="KW-0456">Lyase</keyword>
<keyword id="KW-0501">Molybdenum cofactor biosynthesis</keyword>
<evidence type="ECO:0000255" key="1">
    <source>
        <dbReference type="HAMAP-Rule" id="MF_01224"/>
    </source>
</evidence>
<comment type="function">
    <text evidence="1">Catalyzes the conversion of (8S)-3',8-cyclo-7,8-dihydroguanosine 5'-triphosphate to cyclic pyranopterin monophosphate (cPMP).</text>
</comment>
<comment type="catalytic activity">
    <reaction evidence="1">
        <text>(8S)-3',8-cyclo-7,8-dihydroguanosine 5'-triphosphate = cyclic pyranopterin phosphate + diphosphate</text>
        <dbReference type="Rhea" id="RHEA:49580"/>
        <dbReference type="ChEBI" id="CHEBI:33019"/>
        <dbReference type="ChEBI" id="CHEBI:59648"/>
        <dbReference type="ChEBI" id="CHEBI:131766"/>
        <dbReference type="EC" id="4.6.1.17"/>
    </reaction>
</comment>
<comment type="pathway">
    <text evidence="1">Cofactor biosynthesis; molybdopterin biosynthesis.</text>
</comment>
<comment type="subunit">
    <text evidence="1">Homohexamer; trimer of dimers.</text>
</comment>
<comment type="similarity">
    <text evidence="1">Belongs to the MoaC family.</text>
</comment>
<reference key="1">
    <citation type="submission" date="2009-01" db="EMBL/GenBank/DDBJ databases">
        <title>Complete sequence of Desulfovibrio desulfuricans subsp. desulfuricans str. ATCC 27774.</title>
        <authorList>
            <consortium name="US DOE Joint Genome Institute"/>
            <person name="Lucas S."/>
            <person name="Copeland A."/>
            <person name="Lapidus A."/>
            <person name="Glavina del Rio T."/>
            <person name="Tice H."/>
            <person name="Bruce D."/>
            <person name="Goodwin L."/>
            <person name="Pitluck S."/>
            <person name="Sims D."/>
            <person name="Lu M."/>
            <person name="Kiss H."/>
            <person name="Meineke L."/>
            <person name="Brettin T."/>
            <person name="Detter J.C."/>
            <person name="Han C."/>
            <person name="Larimer F."/>
            <person name="Land M."/>
            <person name="Hauser L."/>
            <person name="Kyrpides N."/>
            <person name="Ovchinnikova G."/>
            <person name="Hazen T.C."/>
        </authorList>
    </citation>
    <scope>NUCLEOTIDE SEQUENCE [LARGE SCALE GENOMIC DNA]</scope>
    <source>
        <strain>ATCC 27774 / DSM 6949 / MB</strain>
    </source>
</reference>
<name>MOAC_DESDA</name>
<protein>
    <recommendedName>
        <fullName evidence="1">Cyclic pyranopterin monophosphate synthase</fullName>
        <ecNumber evidence="1">4.6.1.17</ecNumber>
    </recommendedName>
    <alternativeName>
        <fullName evidence="1">Molybdenum cofactor biosynthesis protein C</fullName>
    </alternativeName>
</protein>
<dbReference type="EC" id="4.6.1.17" evidence="1"/>
<dbReference type="EMBL" id="CP001358">
    <property type="protein sequence ID" value="ACL48411.1"/>
    <property type="molecule type" value="Genomic_DNA"/>
</dbReference>
<dbReference type="SMR" id="B8J4F3"/>
<dbReference type="STRING" id="525146.Ddes_0500"/>
<dbReference type="KEGG" id="dds:Ddes_0500"/>
<dbReference type="eggNOG" id="COG0315">
    <property type="taxonomic scope" value="Bacteria"/>
</dbReference>
<dbReference type="HOGENOM" id="CLU_074693_1_1_7"/>
<dbReference type="UniPathway" id="UPA00344"/>
<dbReference type="GO" id="GO:0061799">
    <property type="term" value="F:cyclic pyranopterin monophosphate synthase activity"/>
    <property type="evidence" value="ECO:0007669"/>
    <property type="project" value="UniProtKB-UniRule"/>
</dbReference>
<dbReference type="GO" id="GO:0006777">
    <property type="term" value="P:Mo-molybdopterin cofactor biosynthetic process"/>
    <property type="evidence" value="ECO:0007669"/>
    <property type="project" value="UniProtKB-UniRule"/>
</dbReference>
<dbReference type="CDD" id="cd01420">
    <property type="entry name" value="MoaC_PE"/>
    <property type="match status" value="1"/>
</dbReference>
<dbReference type="Gene3D" id="3.30.70.640">
    <property type="entry name" value="Molybdopterin cofactor biosynthesis C (MoaC) domain"/>
    <property type="match status" value="1"/>
</dbReference>
<dbReference type="HAMAP" id="MF_01224_B">
    <property type="entry name" value="MoaC_B"/>
    <property type="match status" value="1"/>
</dbReference>
<dbReference type="InterPro" id="IPR023045">
    <property type="entry name" value="MoaC"/>
</dbReference>
<dbReference type="InterPro" id="IPR047594">
    <property type="entry name" value="MoaC_bact/euk"/>
</dbReference>
<dbReference type="InterPro" id="IPR036522">
    <property type="entry name" value="MoaC_sf"/>
</dbReference>
<dbReference type="InterPro" id="IPR050105">
    <property type="entry name" value="MoCo_biosynth_MoaA/MoaC"/>
</dbReference>
<dbReference type="InterPro" id="IPR002820">
    <property type="entry name" value="Mopterin_CF_biosynth-C_dom"/>
</dbReference>
<dbReference type="NCBIfam" id="TIGR00581">
    <property type="entry name" value="moaC"/>
    <property type="match status" value="1"/>
</dbReference>
<dbReference type="NCBIfam" id="NF006870">
    <property type="entry name" value="PRK09364.1"/>
    <property type="match status" value="1"/>
</dbReference>
<dbReference type="PANTHER" id="PTHR22960">
    <property type="entry name" value="MOLYBDOPTERIN COFACTOR SYNTHESIS PROTEIN A"/>
    <property type="match status" value="1"/>
</dbReference>
<dbReference type="Pfam" id="PF01967">
    <property type="entry name" value="MoaC"/>
    <property type="match status" value="1"/>
</dbReference>
<dbReference type="SUPFAM" id="SSF55040">
    <property type="entry name" value="Molybdenum cofactor biosynthesis protein C, MoaC"/>
    <property type="match status" value="1"/>
</dbReference>
<proteinExistence type="inferred from homology"/>
<accession>B8J4F3</accession>
<organism>
    <name type="scientific">Desulfovibrio desulfuricans (strain ATCC 27774 / DSM 6949 / MB)</name>
    <dbReference type="NCBI Taxonomy" id="525146"/>
    <lineage>
        <taxon>Bacteria</taxon>
        <taxon>Pseudomonadati</taxon>
        <taxon>Thermodesulfobacteriota</taxon>
        <taxon>Desulfovibrionia</taxon>
        <taxon>Desulfovibrionales</taxon>
        <taxon>Desulfovibrionaceae</taxon>
        <taxon>Desulfovibrio</taxon>
    </lineage>
</organism>
<sequence>MNSSFSHLDGQGNVTMVDVGGKQATERVAIAEAVVELRPATLELLLKVALPKGDVLTCAKIGGIMAAKRVGEIIPLCHPLSLTYADIRFEVSEAPPRIRIEAETRTVGNTGVEMEAIVAAQTAAAVIYDMCKAVQRDIIISRVRLLHKRGGKSGEFNAPDMEE</sequence>